<name>RNPA_LACPL</name>
<proteinExistence type="inferred from homology"/>
<accession>Q88RX0</accession>
<accession>F9ULM9</accession>
<gene>
    <name evidence="1" type="primary">rnpA</name>
    <name type="ordered locus">lp_3688</name>
</gene>
<sequence>MRKSYRVKKETEFQQVFETRNSYANRQFVIYVLEKPGQPHFRVGISVGKKIGNAVARNWVKRRIRQSITELKPQLKQDADFLVIARPTVAGKSQAETKAYLSHALKLAHLLDND</sequence>
<comment type="function">
    <text evidence="1">RNaseP catalyzes the removal of the 5'-leader sequence from pre-tRNA to produce the mature 5'-terminus. It can also cleave other RNA substrates such as 4.5S RNA. The protein component plays an auxiliary but essential role in vivo by binding to the 5'-leader sequence and broadening the substrate specificity of the ribozyme.</text>
</comment>
<comment type="catalytic activity">
    <reaction evidence="1">
        <text>Endonucleolytic cleavage of RNA, removing 5'-extranucleotides from tRNA precursor.</text>
        <dbReference type="EC" id="3.1.26.5"/>
    </reaction>
</comment>
<comment type="subunit">
    <text evidence="1">Consists of a catalytic RNA component (M1 or rnpB) and a protein subunit.</text>
</comment>
<comment type="similarity">
    <text evidence="1">Belongs to the RnpA family.</text>
</comment>
<organism>
    <name type="scientific">Lactiplantibacillus plantarum (strain ATCC BAA-793 / NCIMB 8826 / WCFS1)</name>
    <name type="common">Lactobacillus plantarum</name>
    <dbReference type="NCBI Taxonomy" id="220668"/>
    <lineage>
        <taxon>Bacteria</taxon>
        <taxon>Bacillati</taxon>
        <taxon>Bacillota</taxon>
        <taxon>Bacilli</taxon>
        <taxon>Lactobacillales</taxon>
        <taxon>Lactobacillaceae</taxon>
        <taxon>Lactiplantibacillus</taxon>
    </lineage>
</organism>
<reference key="1">
    <citation type="journal article" date="2003" name="Proc. Natl. Acad. Sci. U.S.A.">
        <title>Complete genome sequence of Lactobacillus plantarum WCFS1.</title>
        <authorList>
            <person name="Kleerebezem M."/>
            <person name="Boekhorst J."/>
            <person name="van Kranenburg R."/>
            <person name="Molenaar D."/>
            <person name="Kuipers O.P."/>
            <person name="Leer R."/>
            <person name="Tarchini R."/>
            <person name="Peters S.A."/>
            <person name="Sandbrink H.M."/>
            <person name="Fiers M.W.E.J."/>
            <person name="Stiekema W."/>
            <person name="Klein Lankhorst R.M."/>
            <person name="Bron P.A."/>
            <person name="Hoffer S.M."/>
            <person name="Nierop Groot M.N."/>
            <person name="Kerkhoven R."/>
            <person name="De Vries M."/>
            <person name="Ursing B."/>
            <person name="De Vos W.M."/>
            <person name="Siezen R.J."/>
        </authorList>
    </citation>
    <scope>NUCLEOTIDE SEQUENCE [LARGE SCALE GENOMIC DNA]</scope>
    <source>
        <strain>ATCC BAA-793 / NCIMB 8826 / WCFS1</strain>
    </source>
</reference>
<reference key="2">
    <citation type="journal article" date="2012" name="J. Bacteriol.">
        <title>Complete resequencing and reannotation of the Lactobacillus plantarum WCFS1 genome.</title>
        <authorList>
            <person name="Siezen R.J."/>
            <person name="Francke C."/>
            <person name="Renckens B."/>
            <person name="Boekhorst J."/>
            <person name="Wels M."/>
            <person name="Kleerebezem M."/>
            <person name="van Hijum S.A."/>
        </authorList>
    </citation>
    <scope>NUCLEOTIDE SEQUENCE [LARGE SCALE GENOMIC DNA]</scope>
    <scope>GENOME REANNOTATION</scope>
    <source>
        <strain>ATCC BAA-793 / NCIMB 8826 / WCFS1</strain>
    </source>
</reference>
<evidence type="ECO:0000255" key="1">
    <source>
        <dbReference type="HAMAP-Rule" id="MF_00227"/>
    </source>
</evidence>
<dbReference type="EC" id="3.1.26.5" evidence="1"/>
<dbReference type="EMBL" id="AL935263">
    <property type="protein sequence ID" value="CCC80636.1"/>
    <property type="molecule type" value="Genomic_DNA"/>
</dbReference>
<dbReference type="RefSeq" id="WP_003640224.1">
    <property type="nucleotide sequence ID" value="NC_004567.2"/>
</dbReference>
<dbReference type="RefSeq" id="YP_004891150.1">
    <property type="nucleotide sequence ID" value="NC_004567.2"/>
</dbReference>
<dbReference type="SMR" id="Q88RX0"/>
<dbReference type="STRING" id="220668.lp_3688"/>
<dbReference type="EnsemblBacteria" id="CCC80636">
    <property type="protein sequence ID" value="CCC80636"/>
    <property type="gene ID" value="lp_3688"/>
</dbReference>
<dbReference type="GeneID" id="89667764"/>
<dbReference type="KEGG" id="lpl:lp_3688"/>
<dbReference type="PATRIC" id="fig|220668.9.peg.3081"/>
<dbReference type="eggNOG" id="COG0594">
    <property type="taxonomic scope" value="Bacteria"/>
</dbReference>
<dbReference type="HOGENOM" id="CLU_117179_9_1_9"/>
<dbReference type="OrthoDB" id="9810867at2"/>
<dbReference type="PhylomeDB" id="Q88RX0"/>
<dbReference type="Proteomes" id="UP000000432">
    <property type="component" value="Chromosome"/>
</dbReference>
<dbReference type="GO" id="GO:0030677">
    <property type="term" value="C:ribonuclease P complex"/>
    <property type="evidence" value="ECO:0007669"/>
    <property type="project" value="TreeGrafter"/>
</dbReference>
<dbReference type="GO" id="GO:0042781">
    <property type="term" value="F:3'-tRNA processing endoribonuclease activity"/>
    <property type="evidence" value="ECO:0007669"/>
    <property type="project" value="TreeGrafter"/>
</dbReference>
<dbReference type="GO" id="GO:0004526">
    <property type="term" value="F:ribonuclease P activity"/>
    <property type="evidence" value="ECO:0007669"/>
    <property type="project" value="UniProtKB-UniRule"/>
</dbReference>
<dbReference type="GO" id="GO:0000049">
    <property type="term" value="F:tRNA binding"/>
    <property type="evidence" value="ECO:0007669"/>
    <property type="project" value="UniProtKB-UniRule"/>
</dbReference>
<dbReference type="GO" id="GO:0001682">
    <property type="term" value="P:tRNA 5'-leader removal"/>
    <property type="evidence" value="ECO:0007669"/>
    <property type="project" value="UniProtKB-UniRule"/>
</dbReference>
<dbReference type="FunFam" id="3.30.230.10:FF:000021">
    <property type="entry name" value="Ribonuclease P protein component"/>
    <property type="match status" value="1"/>
</dbReference>
<dbReference type="Gene3D" id="3.30.230.10">
    <property type="match status" value="1"/>
</dbReference>
<dbReference type="HAMAP" id="MF_00227">
    <property type="entry name" value="RNase_P"/>
    <property type="match status" value="1"/>
</dbReference>
<dbReference type="InterPro" id="IPR020568">
    <property type="entry name" value="Ribosomal_Su5_D2-typ_SF"/>
</dbReference>
<dbReference type="InterPro" id="IPR014721">
    <property type="entry name" value="Ribsml_uS5_D2-typ_fold_subgr"/>
</dbReference>
<dbReference type="InterPro" id="IPR000100">
    <property type="entry name" value="RNase_P"/>
</dbReference>
<dbReference type="NCBIfam" id="TIGR00188">
    <property type="entry name" value="rnpA"/>
    <property type="match status" value="1"/>
</dbReference>
<dbReference type="PANTHER" id="PTHR33992">
    <property type="entry name" value="RIBONUCLEASE P PROTEIN COMPONENT"/>
    <property type="match status" value="1"/>
</dbReference>
<dbReference type="PANTHER" id="PTHR33992:SF1">
    <property type="entry name" value="RIBONUCLEASE P PROTEIN COMPONENT"/>
    <property type="match status" value="1"/>
</dbReference>
<dbReference type="Pfam" id="PF00825">
    <property type="entry name" value="Ribonuclease_P"/>
    <property type="match status" value="1"/>
</dbReference>
<dbReference type="SUPFAM" id="SSF54211">
    <property type="entry name" value="Ribosomal protein S5 domain 2-like"/>
    <property type="match status" value="1"/>
</dbReference>
<protein>
    <recommendedName>
        <fullName evidence="1">Ribonuclease P protein component</fullName>
        <shortName evidence="1">RNase P protein</shortName>
        <shortName evidence="1">RNaseP protein</shortName>
        <ecNumber evidence="1">3.1.26.5</ecNumber>
    </recommendedName>
    <alternativeName>
        <fullName evidence="1">Protein C5</fullName>
    </alternativeName>
</protein>
<keyword id="KW-0255">Endonuclease</keyword>
<keyword id="KW-0378">Hydrolase</keyword>
<keyword id="KW-0540">Nuclease</keyword>
<keyword id="KW-1185">Reference proteome</keyword>
<keyword id="KW-0694">RNA-binding</keyword>
<keyword id="KW-0819">tRNA processing</keyword>
<feature type="chain" id="PRO_0000198475" description="Ribonuclease P protein component">
    <location>
        <begin position="1"/>
        <end position="114"/>
    </location>
</feature>